<comment type="subcellular location">
    <subcellularLocation>
        <location>Plastid</location>
        <location>Chloroplast</location>
    </subcellularLocation>
</comment>
<comment type="similarity">
    <text evidence="1">Belongs to the bacterial ribosomal protein bL36 family.</text>
</comment>
<geneLocation type="chloroplast"/>
<keyword id="KW-0150">Chloroplast</keyword>
<keyword id="KW-0934">Plastid</keyword>
<keyword id="KW-0687">Ribonucleoprotein</keyword>
<keyword id="KW-0689">Ribosomal protein</keyword>
<feature type="chain" id="PRO_0000276822" description="Large ribosomal subunit protein bL36c">
    <location>
        <begin position="1"/>
        <end position="37"/>
    </location>
</feature>
<protein>
    <recommendedName>
        <fullName evidence="1">Large ribosomal subunit protein bL36c</fullName>
    </recommendedName>
    <alternativeName>
        <fullName evidence="2">50S ribosomal protein L36, chloroplastic</fullName>
    </alternativeName>
</protein>
<gene>
    <name evidence="1" type="primary">rpl36</name>
</gene>
<reference key="1">
    <citation type="journal article" date="2006" name="BMC Evol. Biol.">
        <title>Complete plastid genome sequences of Drimys, Liriodendron, and Piper: implications for the phylogenetic relationships of magnoliids.</title>
        <authorList>
            <person name="Cai Z."/>
            <person name="Penaflor C."/>
            <person name="Kuehl J.V."/>
            <person name="Leebens-Mack J."/>
            <person name="Carlson J.E."/>
            <person name="dePamphilis C.W."/>
            <person name="Boore J.L."/>
            <person name="Jansen R.K."/>
        </authorList>
    </citation>
    <scope>NUCLEOTIDE SEQUENCE [LARGE SCALE GENOMIC DNA]</scope>
</reference>
<name>RK36_LIRTU</name>
<evidence type="ECO:0000255" key="1">
    <source>
        <dbReference type="HAMAP-Rule" id="MF_00251"/>
    </source>
</evidence>
<evidence type="ECO:0000305" key="2"/>
<organism>
    <name type="scientific">Liriodendron tulipifera</name>
    <name type="common">Tuliptree</name>
    <name type="synonym">Tulip poplar</name>
    <dbReference type="NCBI Taxonomy" id="3415"/>
    <lineage>
        <taxon>Eukaryota</taxon>
        <taxon>Viridiplantae</taxon>
        <taxon>Streptophyta</taxon>
        <taxon>Embryophyta</taxon>
        <taxon>Tracheophyta</taxon>
        <taxon>Spermatophyta</taxon>
        <taxon>Magnoliopsida</taxon>
        <taxon>Magnoliidae</taxon>
        <taxon>Magnoliales</taxon>
        <taxon>Magnoliaceae</taxon>
        <taxon>Liriodendron</taxon>
    </lineage>
</organism>
<accession>Q0G9I5</accession>
<proteinExistence type="inferred from homology"/>
<dbReference type="EMBL" id="DQ899947">
    <property type="protein sequence ID" value="ABI32543.1"/>
    <property type="molecule type" value="Genomic_DNA"/>
</dbReference>
<dbReference type="RefSeq" id="YP_740236.1">
    <property type="nucleotide sequence ID" value="NC_008326.1"/>
</dbReference>
<dbReference type="SMR" id="Q0G9I5"/>
<dbReference type="GeneID" id="4266660"/>
<dbReference type="GO" id="GO:0009507">
    <property type="term" value="C:chloroplast"/>
    <property type="evidence" value="ECO:0007669"/>
    <property type="project" value="UniProtKB-SubCell"/>
</dbReference>
<dbReference type="GO" id="GO:1990904">
    <property type="term" value="C:ribonucleoprotein complex"/>
    <property type="evidence" value="ECO:0007669"/>
    <property type="project" value="UniProtKB-KW"/>
</dbReference>
<dbReference type="GO" id="GO:0005840">
    <property type="term" value="C:ribosome"/>
    <property type="evidence" value="ECO:0007669"/>
    <property type="project" value="UniProtKB-KW"/>
</dbReference>
<dbReference type="GO" id="GO:0003735">
    <property type="term" value="F:structural constituent of ribosome"/>
    <property type="evidence" value="ECO:0007669"/>
    <property type="project" value="InterPro"/>
</dbReference>
<dbReference type="GO" id="GO:0006412">
    <property type="term" value="P:translation"/>
    <property type="evidence" value="ECO:0007669"/>
    <property type="project" value="UniProtKB-UniRule"/>
</dbReference>
<dbReference type="HAMAP" id="MF_00251">
    <property type="entry name" value="Ribosomal_bL36"/>
    <property type="match status" value="1"/>
</dbReference>
<dbReference type="InterPro" id="IPR000473">
    <property type="entry name" value="Ribosomal_bL36"/>
</dbReference>
<dbReference type="InterPro" id="IPR035977">
    <property type="entry name" value="Ribosomal_bL36_sp"/>
</dbReference>
<dbReference type="NCBIfam" id="TIGR01022">
    <property type="entry name" value="rpmJ_bact"/>
    <property type="match status" value="1"/>
</dbReference>
<dbReference type="PANTHER" id="PTHR42888">
    <property type="entry name" value="50S RIBOSOMAL PROTEIN L36, CHLOROPLASTIC"/>
    <property type="match status" value="1"/>
</dbReference>
<dbReference type="PANTHER" id="PTHR42888:SF1">
    <property type="entry name" value="LARGE RIBOSOMAL SUBUNIT PROTEIN BL36C"/>
    <property type="match status" value="1"/>
</dbReference>
<dbReference type="Pfam" id="PF00444">
    <property type="entry name" value="Ribosomal_L36"/>
    <property type="match status" value="1"/>
</dbReference>
<dbReference type="SUPFAM" id="SSF57840">
    <property type="entry name" value="Ribosomal protein L36"/>
    <property type="match status" value="1"/>
</dbReference>
<dbReference type="PROSITE" id="PS00828">
    <property type="entry name" value="RIBOSOMAL_L36"/>
    <property type="match status" value="1"/>
</dbReference>
<sequence>MKIRASVRKICEKCRLIRRRGRIIVICFNPRHKQRQG</sequence>